<feature type="transit peptide" description="Mitochondrion" evidence="1">
    <location>
        <begin position="1"/>
        <end position="39"/>
    </location>
</feature>
<feature type="chain" id="PRO_0000003584" description="Cholesterol side-chain cleavage enzyme, mitochondrial">
    <location>
        <begin position="40"/>
        <end position="520"/>
    </location>
</feature>
<feature type="region of interest" description="Disordered" evidence="4">
    <location>
        <begin position="19"/>
        <end position="47"/>
    </location>
</feature>
<feature type="binding site" description="axial binding residue" evidence="2">
    <location>
        <position position="461"/>
    </location>
    <ligand>
        <name>heme</name>
        <dbReference type="ChEBI" id="CHEBI:30413"/>
    </ligand>
    <ligandPart>
        <name>Fe</name>
        <dbReference type="ChEBI" id="CHEBI:18248"/>
    </ligandPart>
</feature>
<sequence length="520" mass="60314">MLVRGLPLRSVLVKGCQPLLSAPREGPGHPRVPTGEGAGMSSHSPRPFKEIPSPGDNGWINLYHFWREKGPKKLHYHHFQNFQKYGPIYREKLGNVESVYIVDPEDVALLFKFEGPHPERFLIPPWTAYHQYFQKPVGVLFKSSDAWKKDRLALNPEVMALESIKNFIPLLDPVSQDFVSLLHRRMEQQGSGKFSGPIIEDLFRFAFESITNVIFGERQGMLDEIVDPEAQRFIDAVYKMFHTSVPMLSLPPDLFRLFRTKTWRDHVAAWDTVFSKAEQYTEKFYQDLKQKRHFDSYPGIFYRLLASNKLPFKDIQANVTEMLAGGVDTTSMSLQWHLYEIARNLRVQEMLREEVLAARRQAQGDTSTMVQMVPLLKASIKETLRLHPIAVTLQRYPQNDLVIRDYMIPAKTLVQVSIYTMGQDPTFFSNPRRFDPTRWLDKNKDLTHFRNLGFGWGVRQCLGRRIAELEMTLFLIHILENFRVEIQHLNDVDSTFGLILIPEKPISFTFWPITRAPPQA</sequence>
<gene>
    <name type="primary">CYP11A1</name>
</gene>
<protein>
    <recommendedName>
        <fullName evidence="2">Cholesterol side-chain cleavage enzyme, mitochondrial</fullName>
        <ecNumber evidence="2">1.14.15.6</ecNumber>
    </recommendedName>
    <alternativeName>
        <fullName>CYPXIA1</fullName>
    </alternativeName>
    <alternativeName>
        <fullName>Cholesterol desmolase</fullName>
    </alternativeName>
    <alternativeName>
        <fullName>Cytochrome P450 11A1</fullName>
    </alternativeName>
    <alternativeName>
        <fullName>Cytochrome P450(scc)</fullName>
    </alternativeName>
</protein>
<accession>O46515</accession>
<comment type="function">
    <text evidence="2">A cytochrome P450 monooxygenase that catalyzes the side-chain hydroxylation and cleavage of cholesterol to pregnenolone, the precursor of most steroid hormones. Catalyzes three sequential oxidation reactions of cholesterol, namely the hydroxylation at C22 followed with the hydroxylation at C20 to yield 20R,22R-hydroxycholesterol that is further cleaved between C20 and C22 to yield the C21-steroid pregnenolone and 4-methylpentanal. Mechanistically, uses molecular oxygen inserting one oxygen atom into a substrate and reducing the second into a water molecule. Two electrons are provided by NADPH via a two-protein mitochondrial transfer system comprising flavoprotein FDXR (adrenodoxin/ferredoxin reductase) and nonheme iron-sulfur protein FDX1 or FDX2 (adrenodoxin/ferredoxin).</text>
</comment>
<comment type="catalytic activity">
    <reaction evidence="2">
        <text>6 reduced [adrenodoxin] + cholesterol + 3 O2 + 6 H(+) = 4-methylpentanal + pregnenolone + 6 oxidized [adrenodoxin] + 4 H2O</text>
        <dbReference type="Rhea" id="RHEA:35739"/>
        <dbReference type="Rhea" id="RHEA-COMP:9998"/>
        <dbReference type="Rhea" id="RHEA-COMP:9999"/>
        <dbReference type="ChEBI" id="CHEBI:15377"/>
        <dbReference type="ChEBI" id="CHEBI:15378"/>
        <dbReference type="ChEBI" id="CHEBI:15379"/>
        <dbReference type="ChEBI" id="CHEBI:16113"/>
        <dbReference type="ChEBI" id="CHEBI:16581"/>
        <dbReference type="ChEBI" id="CHEBI:17998"/>
        <dbReference type="ChEBI" id="CHEBI:33737"/>
        <dbReference type="ChEBI" id="CHEBI:33738"/>
        <dbReference type="EC" id="1.14.15.6"/>
    </reaction>
    <physiologicalReaction direction="left-to-right" evidence="2">
        <dbReference type="Rhea" id="RHEA:35740"/>
    </physiologicalReaction>
</comment>
<comment type="catalytic activity">
    <reaction evidence="2">
        <text>2 reduced [adrenodoxin] + cholesterol + O2 + 2 H(+) = (22R)-hydroxycholesterol + 2 oxidized [adrenodoxin] + H2O</text>
        <dbReference type="Rhea" id="RHEA:34335"/>
        <dbReference type="Rhea" id="RHEA-COMP:9998"/>
        <dbReference type="Rhea" id="RHEA-COMP:9999"/>
        <dbReference type="ChEBI" id="CHEBI:15377"/>
        <dbReference type="ChEBI" id="CHEBI:15378"/>
        <dbReference type="ChEBI" id="CHEBI:15379"/>
        <dbReference type="ChEBI" id="CHEBI:16113"/>
        <dbReference type="ChEBI" id="CHEBI:33737"/>
        <dbReference type="ChEBI" id="CHEBI:33738"/>
        <dbReference type="ChEBI" id="CHEBI:67237"/>
    </reaction>
    <physiologicalReaction direction="left-to-right" evidence="2">
        <dbReference type="Rhea" id="RHEA:34336"/>
    </physiologicalReaction>
</comment>
<comment type="catalytic activity">
    <reaction evidence="2">
        <text>(22R)-hydroxycholesterol + 2 reduced [adrenodoxin] + O2 + 2 H(+) = (20R,22R)-20,22-dihydroxycholesterol + 2 oxidized [adrenodoxin] + H2O</text>
        <dbReference type="Rhea" id="RHEA:34339"/>
        <dbReference type="Rhea" id="RHEA-COMP:9998"/>
        <dbReference type="Rhea" id="RHEA-COMP:9999"/>
        <dbReference type="ChEBI" id="CHEBI:1294"/>
        <dbReference type="ChEBI" id="CHEBI:15377"/>
        <dbReference type="ChEBI" id="CHEBI:15378"/>
        <dbReference type="ChEBI" id="CHEBI:15379"/>
        <dbReference type="ChEBI" id="CHEBI:33737"/>
        <dbReference type="ChEBI" id="CHEBI:33738"/>
        <dbReference type="ChEBI" id="CHEBI:67237"/>
    </reaction>
    <physiologicalReaction direction="left-to-right" evidence="2">
        <dbReference type="Rhea" id="RHEA:34340"/>
    </physiologicalReaction>
</comment>
<comment type="catalytic activity">
    <reaction evidence="2">
        <text>(20R,22R)-20,22-dihydroxycholesterol + 2 reduced [adrenodoxin] + O2 + 2 H(+) = 4-methylpentanal + pregnenolone + 2 oxidized [adrenodoxin] + 2 H2O</text>
        <dbReference type="Rhea" id="RHEA:34343"/>
        <dbReference type="Rhea" id="RHEA-COMP:9998"/>
        <dbReference type="Rhea" id="RHEA-COMP:9999"/>
        <dbReference type="ChEBI" id="CHEBI:1294"/>
        <dbReference type="ChEBI" id="CHEBI:15377"/>
        <dbReference type="ChEBI" id="CHEBI:15378"/>
        <dbReference type="ChEBI" id="CHEBI:15379"/>
        <dbReference type="ChEBI" id="CHEBI:16581"/>
        <dbReference type="ChEBI" id="CHEBI:17998"/>
        <dbReference type="ChEBI" id="CHEBI:33737"/>
        <dbReference type="ChEBI" id="CHEBI:33738"/>
    </reaction>
    <physiologicalReaction direction="left-to-right" evidence="2">
        <dbReference type="Rhea" id="RHEA:34344"/>
    </physiologicalReaction>
</comment>
<comment type="cofactor">
    <cofactor evidence="2">
        <name>heme</name>
        <dbReference type="ChEBI" id="CHEBI:30413"/>
    </cofactor>
</comment>
<comment type="pathway">
    <text evidence="2">Lipid metabolism; C21-steroid hormone metabolism.</text>
</comment>
<comment type="pathway">
    <text evidence="2">Steroid metabolism; cholesterol metabolism.</text>
</comment>
<comment type="subunit">
    <text evidence="2">Interacts with FDX1/adrenodoxin.</text>
</comment>
<comment type="subcellular location">
    <subcellularLocation>
        <location evidence="3">Mitochondrion inner membrane</location>
        <topology evidence="5">Peripheral membrane protein</topology>
    </subcellularLocation>
    <text evidence="3">Localizes to the matrix side of the mitochondrion inner membrane.</text>
</comment>
<comment type="similarity">
    <text evidence="5">Belongs to the cytochrome P450 family.</text>
</comment>
<keyword id="KW-0153">Cholesterol metabolism</keyword>
<keyword id="KW-0349">Heme</keyword>
<keyword id="KW-0408">Iron</keyword>
<keyword id="KW-0443">Lipid metabolism</keyword>
<keyword id="KW-0472">Membrane</keyword>
<keyword id="KW-0479">Metal-binding</keyword>
<keyword id="KW-0496">Mitochondrion</keyword>
<keyword id="KW-0999">Mitochondrion inner membrane</keyword>
<keyword id="KW-0503">Monooxygenase</keyword>
<keyword id="KW-0560">Oxidoreductase</keyword>
<keyword id="KW-1185">Reference proteome</keyword>
<keyword id="KW-0753">Steroid metabolism</keyword>
<keyword id="KW-0755">Steroidogenesis</keyword>
<keyword id="KW-1207">Sterol metabolism</keyword>
<keyword id="KW-0809">Transit peptide</keyword>
<name>CP11A_HORSE</name>
<reference key="1">
    <citation type="journal article" date="2001" name="Biol. Reprod.">
        <title>Equine P450 cholesterol side-chain cleavage and 3 beta-hydroxysteroid dehydrogenase/delta(5)-delta(4) isomerase: molecular cloning and regulation of their messenger ribonucleic acids in equine follicles during the ovulatory process.</title>
        <authorList>
            <person name="Boerboom D."/>
            <person name="Sirois J."/>
        </authorList>
    </citation>
    <scope>NUCLEOTIDE SEQUENCE [GENOMIC DNA]</scope>
    <source>
        <tissue>Ovarian follicle membrane</tissue>
    </source>
</reference>
<evidence type="ECO:0000250" key="1">
    <source>
        <dbReference type="UniProtKB" id="P00189"/>
    </source>
</evidence>
<evidence type="ECO:0000250" key="2">
    <source>
        <dbReference type="UniProtKB" id="P05108"/>
    </source>
</evidence>
<evidence type="ECO:0000250" key="3">
    <source>
        <dbReference type="UniProtKB" id="P14137"/>
    </source>
</evidence>
<evidence type="ECO:0000256" key="4">
    <source>
        <dbReference type="SAM" id="MobiDB-lite"/>
    </source>
</evidence>
<evidence type="ECO:0000305" key="5"/>
<dbReference type="EC" id="1.14.15.6" evidence="2"/>
<dbReference type="EMBL" id="AF031664">
    <property type="protein sequence ID" value="AAC04700.1"/>
    <property type="molecule type" value="Genomic_DNA"/>
</dbReference>
<dbReference type="RefSeq" id="NP_001075990.1">
    <property type="nucleotide sequence ID" value="NM_001082521.1"/>
</dbReference>
<dbReference type="SMR" id="O46515"/>
<dbReference type="FunCoup" id="O46515">
    <property type="interactions" value="37"/>
</dbReference>
<dbReference type="STRING" id="9796.ENSECAP00000015487"/>
<dbReference type="PaxDb" id="9796-ENSECAP00000015487"/>
<dbReference type="GeneID" id="100034229"/>
<dbReference type="KEGG" id="ecb:100034229"/>
<dbReference type="CTD" id="1583"/>
<dbReference type="InParanoid" id="O46515"/>
<dbReference type="OrthoDB" id="3945418at2759"/>
<dbReference type="UniPathway" id="UPA00229"/>
<dbReference type="UniPathway" id="UPA00296"/>
<dbReference type="Proteomes" id="UP000002281">
    <property type="component" value="Unplaced"/>
</dbReference>
<dbReference type="GO" id="GO:0005743">
    <property type="term" value="C:mitochondrial inner membrane"/>
    <property type="evidence" value="ECO:0000250"/>
    <property type="project" value="UniProtKB"/>
</dbReference>
<dbReference type="GO" id="GO:0008386">
    <property type="term" value="F:cholesterol monooxygenase (side-chain-cleaving) activity"/>
    <property type="evidence" value="ECO:0000250"/>
    <property type="project" value="UniProtKB"/>
</dbReference>
<dbReference type="GO" id="GO:0020037">
    <property type="term" value="F:heme binding"/>
    <property type="evidence" value="ECO:0000250"/>
    <property type="project" value="UniProtKB"/>
</dbReference>
<dbReference type="GO" id="GO:0005506">
    <property type="term" value="F:iron ion binding"/>
    <property type="evidence" value="ECO:0007669"/>
    <property type="project" value="InterPro"/>
</dbReference>
<dbReference type="GO" id="GO:0006700">
    <property type="term" value="P:C21-steroid hormone biosynthetic process"/>
    <property type="evidence" value="ECO:0000250"/>
    <property type="project" value="UniProtKB"/>
</dbReference>
<dbReference type="GO" id="GO:0071375">
    <property type="term" value="P:cellular response to peptide hormone stimulus"/>
    <property type="evidence" value="ECO:0000318"/>
    <property type="project" value="GO_Central"/>
</dbReference>
<dbReference type="GO" id="GO:0008203">
    <property type="term" value="P:cholesterol metabolic process"/>
    <property type="evidence" value="ECO:0000250"/>
    <property type="project" value="UniProtKB"/>
</dbReference>
<dbReference type="GO" id="GO:0034650">
    <property type="term" value="P:cortisol metabolic process"/>
    <property type="evidence" value="ECO:0000318"/>
    <property type="project" value="GO_Central"/>
</dbReference>
<dbReference type="GO" id="GO:0006704">
    <property type="term" value="P:glucocorticoid biosynthetic process"/>
    <property type="evidence" value="ECO:0000318"/>
    <property type="project" value="GO_Central"/>
</dbReference>
<dbReference type="FunFam" id="1.10.630.10:FF:000015">
    <property type="entry name" value="Cholesterol side-chain cleavage enzyme, mitochondrial"/>
    <property type="match status" value="1"/>
</dbReference>
<dbReference type="Gene3D" id="1.10.630.10">
    <property type="entry name" value="Cytochrome P450"/>
    <property type="match status" value="1"/>
</dbReference>
<dbReference type="InterPro" id="IPR050479">
    <property type="entry name" value="CYP11_CYP27_families"/>
</dbReference>
<dbReference type="InterPro" id="IPR001128">
    <property type="entry name" value="Cyt_P450"/>
</dbReference>
<dbReference type="InterPro" id="IPR017972">
    <property type="entry name" value="Cyt_P450_CS"/>
</dbReference>
<dbReference type="InterPro" id="IPR002401">
    <property type="entry name" value="Cyt_P450_E_grp-I"/>
</dbReference>
<dbReference type="InterPro" id="IPR036396">
    <property type="entry name" value="Cyt_P450_sf"/>
</dbReference>
<dbReference type="PANTHER" id="PTHR24279:SF3">
    <property type="entry name" value="CHOLESTEROL SIDE-CHAIN CLEAVAGE ENZYME, MITOCHONDRIAL"/>
    <property type="match status" value="1"/>
</dbReference>
<dbReference type="PANTHER" id="PTHR24279">
    <property type="entry name" value="CYTOCHROME P450"/>
    <property type="match status" value="1"/>
</dbReference>
<dbReference type="Pfam" id="PF00067">
    <property type="entry name" value="p450"/>
    <property type="match status" value="1"/>
</dbReference>
<dbReference type="PRINTS" id="PR00463">
    <property type="entry name" value="EP450I"/>
</dbReference>
<dbReference type="PRINTS" id="PR00385">
    <property type="entry name" value="P450"/>
</dbReference>
<dbReference type="SUPFAM" id="SSF48264">
    <property type="entry name" value="Cytochrome P450"/>
    <property type="match status" value="1"/>
</dbReference>
<dbReference type="PROSITE" id="PS00086">
    <property type="entry name" value="CYTOCHROME_P450"/>
    <property type="match status" value="1"/>
</dbReference>
<organism>
    <name type="scientific">Equus caballus</name>
    <name type="common">Horse</name>
    <dbReference type="NCBI Taxonomy" id="9796"/>
    <lineage>
        <taxon>Eukaryota</taxon>
        <taxon>Metazoa</taxon>
        <taxon>Chordata</taxon>
        <taxon>Craniata</taxon>
        <taxon>Vertebrata</taxon>
        <taxon>Euteleostomi</taxon>
        <taxon>Mammalia</taxon>
        <taxon>Eutheria</taxon>
        <taxon>Laurasiatheria</taxon>
        <taxon>Perissodactyla</taxon>
        <taxon>Equidae</taxon>
        <taxon>Equus</taxon>
    </lineage>
</organism>
<proteinExistence type="inferred from homology"/>